<comment type="function">
    <text evidence="1">Involved in the TonB-dependent energy-dependent transport of various receptor-bound substrates. Protects ExbD from proteolytic degradation and functionally stabilizes TonB (By similarity).</text>
</comment>
<comment type="subunit">
    <text evidence="1">The accessory proteins ExbB and ExbD seem to form a complex with TonB.</text>
</comment>
<comment type="subcellular location">
    <subcellularLocation>
        <location>Cell inner membrane</location>
        <topology>Multi-pass membrane protein</topology>
    </subcellularLocation>
</comment>
<comment type="similarity">
    <text evidence="3">Belongs to the ExbB/TolQ family.</text>
</comment>
<accession>O52043</accession>
<accession>Q9KL37</accession>
<keyword id="KW-0997">Cell inner membrane</keyword>
<keyword id="KW-1003">Cell membrane</keyword>
<keyword id="KW-0472">Membrane</keyword>
<keyword id="KW-0653">Protein transport</keyword>
<keyword id="KW-1185">Reference proteome</keyword>
<keyword id="KW-0812">Transmembrane</keyword>
<keyword id="KW-1133">Transmembrane helix</keyword>
<keyword id="KW-0813">Transport</keyword>
<protein>
    <recommendedName>
        <fullName>Biopolymer transport protein exbB1</fullName>
    </recommendedName>
</protein>
<dbReference type="EMBL" id="AF016580">
    <property type="protein sequence ID" value="AAB94545.1"/>
    <property type="molecule type" value="Genomic_DNA"/>
</dbReference>
<dbReference type="EMBL" id="AE003853">
    <property type="protein sequence ID" value="AAF96808.1"/>
    <property type="molecule type" value="Genomic_DNA"/>
</dbReference>
<dbReference type="PIR" id="C82400">
    <property type="entry name" value="C82400"/>
</dbReference>
<dbReference type="RefSeq" id="NP_233296.1">
    <property type="nucleotide sequence ID" value="NC_002506.1"/>
</dbReference>
<dbReference type="RefSeq" id="WP_000445085.1">
    <property type="nucleotide sequence ID" value="NZ_LT906615.1"/>
</dbReference>
<dbReference type="SMR" id="O52043"/>
<dbReference type="STRING" id="243277.VC_A0911"/>
<dbReference type="DNASU" id="2612220"/>
<dbReference type="EnsemblBacteria" id="AAF96808">
    <property type="protein sequence ID" value="AAF96808"/>
    <property type="gene ID" value="VC_A0911"/>
</dbReference>
<dbReference type="KEGG" id="vch:VC_A0911"/>
<dbReference type="PATRIC" id="fig|243277.26.peg.3526"/>
<dbReference type="eggNOG" id="COG0811">
    <property type="taxonomic scope" value="Bacteria"/>
</dbReference>
<dbReference type="HOGENOM" id="CLU_053325_5_0_6"/>
<dbReference type="Proteomes" id="UP000000584">
    <property type="component" value="Chromosome 2"/>
</dbReference>
<dbReference type="GO" id="GO:0005886">
    <property type="term" value="C:plasma membrane"/>
    <property type="evidence" value="ECO:0000318"/>
    <property type="project" value="GO_Central"/>
</dbReference>
<dbReference type="GO" id="GO:0017038">
    <property type="term" value="P:protein import"/>
    <property type="evidence" value="ECO:0000318"/>
    <property type="project" value="GO_Central"/>
</dbReference>
<dbReference type="InterPro" id="IPR050790">
    <property type="entry name" value="ExbB/TolQ_transport"/>
</dbReference>
<dbReference type="InterPro" id="IPR002898">
    <property type="entry name" value="MotA_ExbB_proton_chnl"/>
</dbReference>
<dbReference type="PANTHER" id="PTHR30625:SF15">
    <property type="entry name" value="BIOPOLYMER TRANSPORT PROTEIN EXBB"/>
    <property type="match status" value="1"/>
</dbReference>
<dbReference type="PANTHER" id="PTHR30625">
    <property type="entry name" value="PROTEIN TOLQ"/>
    <property type="match status" value="1"/>
</dbReference>
<dbReference type="Pfam" id="PF01618">
    <property type="entry name" value="MotA_ExbB"/>
    <property type="match status" value="1"/>
</dbReference>
<evidence type="ECO:0000250" key="1"/>
<evidence type="ECO:0000255" key="2"/>
<evidence type="ECO:0000305" key="3"/>
<reference key="1">
    <citation type="journal article" date="1998" name="Mol. Microbiol.">
        <title>Vibrio cholerae iron transport: haem transport genes are linked to one of two sets of tonB, exbB, exbD genes.</title>
        <authorList>
            <person name="Occhino D.A."/>
            <person name="Wyckoff E.E."/>
            <person name="Henderson D.P."/>
            <person name="Wrona T.J."/>
            <person name="Payne S.M."/>
        </authorList>
    </citation>
    <scope>NUCLEOTIDE SEQUENCE [GENOMIC DNA]</scope>
    <source>
        <strain>Classical CA401</strain>
    </source>
</reference>
<reference key="2">
    <citation type="journal article" date="2000" name="Nature">
        <title>DNA sequence of both chromosomes of the cholera pathogen Vibrio cholerae.</title>
        <authorList>
            <person name="Heidelberg J.F."/>
            <person name="Eisen J.A."/>
            <person name="Nelson W.C."/>
            <person name="Clayton R.A."/>
            <person name="Gwinn M.L."/>
            <person name="Dodson R.J."/>
            <person name="Haft D.H."/>
            <person name="Hickey E.K."/>
            <person name="Peterson J.D."/>
            <person name="Umayam L.A."/>
            <person name="Gill S.R."/>
            <person name="Nelson K.E."/>
            <person name="Read T.D."/>
            <person name="Tettelin H."/>
            <person name="Richardson D.L."/>
            <person name="Ermolaeva M.D."/>
            <person name="Vamathevan J.J."/>
            <person name="Bass S."/>
            <person name="Qin H."/>
            <person name="Dragoi I."/>
            <person name="Sellers P."/>
            <person name="McDonald L.A."/>
            <person name="Utterback T.R."/>
            <person name="Fleischmann R.D."/>
            <person name="Nierman W.C."/>
            <person name="White O."/>
            <person name="Salzberg S.L."/>
            <person name="Smith H.O."/>
            <person name="Colwell R.R."/>
            <person name="Mekalanos J.J."/>
            <person name="Venter J.C."/>
            <person name="Fraser C.M."/>
        </authorList>
    </citation>
    <scope>NUCLEOTIDE SEQUENCE [LARGE SCALE GENOMIC DNA]</scope>
    <source>
        <strain>ATCC 39315 / El Tor Inaba N16961</strain>
    </source>
</reference>
<gene>
    <name type="primary">exbB1</name>
    <name type="synonym">exbB</name>
    <name type="ordered locus">VC_A0911</name>
</gene>
<organism>
    <name type="scientific">Vibrio cholerae serotype O1 (strain ATCC 39315 / El Tor Inaba N16961)</name>
    <dbReference type="NCBI Taxonomy" id="243277"/>
    <lineage>
        <taxon>Bacteria</taxon>
        <taxon>Pseudomonadati</taxon>
        <taxon>Pseudomonadota</taxon>
        <taxon>Gammaproteobacteria</taxon>
        <taxon>Vibrionales</taxon>
        <taxon>Vibrionaceae</taxon>
        <taxon>Vibrio</taxon>
    </lineage>
</organism>
<proteinExistence type="inferred from homology"/>
<feature type="chain" id="PRO_0000145813" description="Biopolymer transport protein exbB1">
    <location>
        <begin position="1"/>
        <end position="228"/>
    </location>
</feature>
<feature type="transmembrane region" description="Helical" evidence="2">
    <location>
        <begin position="11"/>
        <end position="31"/>
    </location>
</feature>
<feature type="transmembrane region" description="Helical" evidence="2">
    <location>
        <begin position="116"/>
        <end position="136"/>
    </location>
</feature>
<feature type="transmembrane region" description="Helical" evidence="2">
    <location>
        <begin position="158"/>
        <end position="178"/>
    </location>
</feature>
<feature type="sequence conflict" description="In Ref. 1; AAB94545." evidence="3" ref="1">
    <original>Q</original>
    <variation>H</variation>
    <location>
        <position position="9"/>
    </location>
</feature>
<feature type="sequence conflict" description="In Ref. 1; AAB94545." evidence="3" ref="1">
    <original>S</original>
    <variation>N</variation>
    <location>
        <position position="183"/>
    </location>
</feature>
<sequence>MESLQQLQQQLGLMAWPLFICSALTVMLLAERLFQVLLSLTVGKGAIRHALQATSPKNPKQLAELTEHFASKRPVLYRGVAMLLAHHQFDKSLREDAAGIWLQEQRHQFNSGLRLLTLIGVISPLLGLLGTVLGLIEMFKGVAATTGSITPNVLADGLGVAMYTTAAGLLIAVPAVAGAQLLSLWADRTMAKLEHTLNYVNLWLEGMTLHADASLTVVTPQEATTENL</sequence>
<name>EXBB1_VIBCH</name>